<protein>
    <recommendedName>
        <fullName evidence="1">Phosphomethylpyrimidine synthase</fullName>
        <ecNumber evidence="1">4.1.99.17</ecNumber>
    </recommendedName>
    <alternativeName>
        <fullName evidence="1">Hydroxymethylpyrimidine phosphate synthase</fullName>
        <shortName evidence="1">HMP-P synthase</shortName>
        <shortName evidence="1">HMP-phosphate synthase</shortName>
        <shortName evidence="1">HMPP synthase</shortName>
    </alternativeName>
    <alternativeName>
        <fullName evidence="1">Thiamine biosynthesis protein ThiC</fullName>
    </alternativeName>
</protein>
<comment type="function">
    <text evidence="1">Catalyzes the synthesis of the hydroxymethylpyrimidine phosphate (HMP-P) moiety of thiamine from aminoimidazole ribotide (AIR) in a radical S-adenosyl-L-methionine (SAM)-dependent reaction.</text>
</comment>
<comment type="catalytic activity">
    <reaction evidence="1">
        <text>5-amino-1-(5-phospho-beta-D-ribosyl)imidazole + S-adenosyl-L-methionine = 4-amino-2-methyl-5-(phosphooxymethyl)pyrimidine + CO + 5'-deoxyadenosine + formate + L-methionine + 3 H(+)</text>
        <dbReference type="Rhea" id="RHEA:24840"/>
        <dbReference type="ChEBI" id="CHEBI:15378"/>
        <dbReference type="ChEBI" id="CHEBI:15740"/>
        <dbReference type="ChEBI" id="CHEBI:17245"/>
        <dbReference type="ChEBI" id="CHEBI:17319"/>
        <dbReference type="ChEBI" id="CHEBI:57844"/>
        <dbReference type="ChEBI" id="CHEBI:58354"/>
        <dbReference type="ChEBI" id="CHEBI:59789"/>
        <dbReference type="ChEBI" id="CHEBI:137981"/>
        <dbReference type="EC" id="4.1.99.17"/>
    </reaction>
</comment>
<comment type="cofactor">
    <cofactor evidence="1">
        <name>[4Fe-4S] cluster</name>
        <dbReference type="ChEBI" id="CHEBI:49883"/>
    </cofactor>
    <text evidence="1">Binds 1 [4Fe-4S] cluster per subunit. The cluster is coordinated with 3 cysteines and an exchangeable S-adenosyl-L-methionine.</text>
</comment>
<comment type="pathway">
    <text evidence="1">Cofactor biosynthesis; thiamine diphosphate biosynthesis.</text>
</comment>
<comment type="subunit">
    <text evidence="1">Homodimer.</text>
</comment>
<comment type="similarity">
    <text evidence="1">Belongs to the ThiC family.</text>
</comment>
<evidence type="ECO:0000255" key="1">
    <source>
        <dbReference type="HAMAP-Rule" id="MF_00089"/>
    </source>
</evidence>
<sequence length="633" mass="71367">MTTPKKTAKISGNEARELSDLSEDIGIRFKYQNSERVYLQGSRDDIRVPLREIRQDDTYTAQGTEANPPIPVYDTSGAYGDPAAHIDLKQGLPHIRTAWLDERGDTEILPKLSSEYGIERAHDPKTAHLRFNQITRPRRAKAGRNVTQLHYARQGIITPEMEFAAIRERMKLDELFRRPEYAKLLKQHTGQSFGANIPTRPDQITPEFVRQEIAAGRAIIPANINHPELEPMIIGRNFRVKINGNLGNSAVTSSLTEEVEKMVWSLRWGADTIMDLSTGAHIHETREWIIRNAPVPIGTVPIYQTLEKTGGIAEDLTWDLFRDTLIEQAEQGVDYFTIHAGVLLRYVPMTANRLTGIVSRGGSIMAKWCLAHHRENFLYTHFDEICEIMKAYDVSFSLGDGLRPGCIADANDESQFAELHTLGELTDKAWKHDVQVMIEGPGHVPLQRVKENMTEELQHCFEAPFYTLGPLVTDIAPGYDHITSGIGAANIGWYGTAMLCYVTPKEHLGLPDKEDVRTGIITYKLAAHAADLAKGWPGAQLRDNALSKARFEFRWRDQFRLSLDPERAESFHDETLPAEGAKIAHFCSMCGPKFCSMKITQEVRDYADKQKAQRQGMEEKAVEFVKKGAKIYS</sequence>
<organism>
    <name type="scientific">Neisseria gonorrhoeae (strain ATCC 700825 / FA 1090)</name>
    <dbReference type="NCBI Taxonomy" id="242231"/>
    <lineage>
        <taxon>Bacteria</taxon>
        <taxon>Pseudomonadati</taxon>
        <taxon>Pseudomonadota</taxon>
        <taxon>Betaproteobacteria</taxon>
        <taxon>Neisseriales</taxon>
        <taxon>Neisseriaceae</taxon>
        <taxon>Neisseria</taxon>
    </lineage>
</organism>
<feature type="chain" id="PRO_0000242275" description="Phosphomethylpyrimidine synthase">
    <location>
        <begin position="1"/>
        <end position="633"/>
    </location>
</feature>
<feature type="binding site" evidence="1">
    <location>
        <position position="245"/>
    </location>
    <ligand>
        <name>substrate</name>
    </ligand>
</feature>
<feature type="binding site" evidence="1">
    <location>
        <position position="274"/>
    </location>
    <ligand>
        <name>substrate</name>
    </ligand>
</feature>
<feature type="binding site" evidence="1">
    <location>
        <position position="303"/>
    </location>
    <ligand>
        <name>substrate</name>
    </ligand>
</feature>
<feature type="binding site" evidence="1">
    <location>
        <position position="339"/>
    </location>
    <ligand>
        <name>substrate</name>
    </ligand>
</feature>
<feature type="binding site" evidence="1">
    <location>
        <begin position="359"/>
        <end position="361"/>
    </location>
    <ligand>
        <name>substrate</name>
    </ligand>
</feature>
<feature type="binding site" evidence="1">
    <location>
        <begin position="400"/>
        <end position="403"/>
    </location>
    <ligand>
        <name>substrate</name>
    </ligand>
</feature>
<feature type="binding site" evidence="1">
    <location>
        <position position="439"/>
    </location>
    <ligand>
        <name>substrate</name>
    </ligand>
</feature>
<feature type="binding site" evidence="1">
    <location>
        <position position="443"/>
    </location>
    <ligand>
        <name>Zn(2+)</name>
        <dbReference type="ChEBI" id="CHEBI:29105"/>
    </ligand>
</feature>
<feature type="binding site" evidence="1">
    <location>
        <position position="466"/>
    </location>
    <ligand>
        <name>substrate</name>
    </ligand>
</feature>
<feature type="binding site" evidence="1">
    <location>
        <position position="507"/>
    </location>
    <ligand>
        <name>Zn(2+)</name>
        <dbReference type="ChEBI" id="CHEBI:29105"/>
    </ligand>
</feature>
<feature type="binding site" evidence="1">
    <location>
        <position position="587"/>
    </location>
    <ligand>
        <name>[4Fe-4S] cluster</name>
        <dbReference type="ChEBI" id="CHEBI:49883"/>
        <note>4Fe-4S-S-AdoMet</note>
    </ligand>
</feature>
<feature type="binding site" evidence="1">
    <location>
        <position position="590"/>
    </location>
    <ligand>
        <name>[4Fe-4S] cluster</name>
        <dbReference type="ChEBI" id="CHEBI:49883"/>
        <note>4Fe-4S-S-AdoMet</note>
    </ligand>
</feature>
<feature type="binding site" evidence="1">
    <location>
        <position position="595"/>
    </location>
    <ligand>
        <name>[4Fe-4S] cluster</name>
        <dbReference type="ChEBI" id="CHEBI:49883"/>
        <note>4Fe-4S-S-AdoMet</note>
    </ligand>
</feature>
<keyword id="KW-0004">4Fe-4S</keyword>
<keyword id="KW-0408">Iron</keyword>
<keyword id="KW-0411">Iron-sulfur</keyword>
<keyword id="KW-0456">Lyase</keyword>
<keyword id="KW-0479">Metal-binding</keyword>
<keyword id="KW-1185">Reference proteome</keyword>
<keyword id="KW-0949">S-adenosyl-L-methionine</keyword>
<keyword id="KW-0784">Thiamine biosynthesis</keyword>
<keyword id="KW-0862">Zinc</keyword>
<gene>
    <name evidence="1" type="primary">thiC</name>
    <name type="ordered locus">NGO_2041</name>
</gene>
<name>THIC_NEIG1</name>
<dbReference type="EC" id="4.1.99.17" evidence="1"/>
<dbReference type="EMBL" id="AE004969">
    <property type="protein sequence ID" value="AAW90649.1"/>
    <property type="molecule type" value="Genomic_DNA"/>
</dbReference>
<dbReference type="RefSeq" id="WP_003686973.1">
    <property type="nucleotide sequence ID" value="NC_002946.2"/>
</dbReference>
<dbReference type="RefSeq" id="YP_209061.1">
    <property type="nucleotide sequence ID" value="NC_002946.2"/>
</dbReference>
<dbReference type="SMR" id="Q5F588"/>
<dbReference type="STRING" id="242231.NGO_2041"/>
<dbReference type="KEGG" id="ngo:NGO_2041"/>
<dbReference type="PATRIC" id="fig|242231.10.peg.2456"/>
<dbReference type="HOGENOM" id="CLU_013181_2_1_4"/>
<dbReference type="UniPathway" id="UPA00060"/>
<dbReference type="Proteomes" id="UP000000535">
    <property type="component" value="Chromosome"/>
</dbReference>
<dbReference type="GO" id="GO:0005829">
    <property type="term" value="C:cytosol"/>
    <property type="evidence" value="ECO:0007669"/>
    <property type="project" value="TreeGrafter"/>
</dbReference>
<dbReference type="GO" id="GO:0051539">
    <property type="term" value="F:4 iron, 4 sulfur cluster binding"/>
    <property type="evidence" value="ECO:0007669"/>
    <property type="project" value="UniProtKB-KW"/>
</dbReference>
<dbReference type="GO" id="GO:0016830">
    <property type="term" value="F:carbon-carbon lyase activity"/>
    <property type="evidence" value="ECO:0007669"/>
    <property type="project" value="InterPro"/>
</dbReference>
<dbReference type="GO" id="GO:0008270">
    <property type="term" value="F:zinc ion binding"/>
    <property type="evidence" value="ECO:0007669"/>
    <property type="project" value="UniProtKB-UniRule"/>
</dbReference>
<dbReference type="GO" id="GO:0009228">
    <property type="term" value="P:thiamine biosynthetic process"/>
    <property type="evidence" value="ECO:0007669"/>
    <property type="project" value="UniProtKB-KW"/>
</dbReference>
<dbReference type="GO" id="GO:0009229">
    <property type="term" value="P:thiamine diphosphate biosynthetic process"/>
    <property type="evidence" value="ECO:0007669"/>
    <property type="project" value="UniProtKB-UniRule"/>
</dbReference>
<dbReference type="FunFam" id="3.20.20.540:FF:000001">
    <property type="entry name" value="Phosphomethylpyrimidine synthase"/>
    <property type="match status" value="1"/>
</dbReference>
<dbReference type="Gene3D" id="6.10.250.620">
    <property type="match status" value="1"/>
</dbReference>
<dbReference type="Gene3D" id="3.20.20.540">
    <property type="entry name" value="Radical SAM ThiC family, central domain"/>
    <property type="match status" value="1"/>
</dbReference>
<dbReference type="HAMAP" id="MF_00089">
    <property type="entry name" value="ThiC"/>
    <property type="match status" value="1"/>
</dbReference>
<dbReference type="InterPro" id="IPR037509">
    <property type="entry name" value="ThiC"/>
</dbReference>
<dbReference type="InterPro" id="IPR025747">
    <property type="entry name" value="ThiC-associated_dom"/>
</dbReference>
<dbReference type="InterPro" id="IPR038521">
    <property type="entry name" value="ThiC/Bza_core_dom"/>
</dbReference>
<dbReference type="InterPro" id="IPR002817">
    <property type="entry name" value="ThiC/BzaA/B"/>
</dbReference>
<dbReference type="NCBIfam" id="NF006763">
    <property type="entry name" value="PRK09284.1"/>
    <property type="match status" value="1"/>
</dbReference>
<dbReference type="NCBIfam" id="NF009895">
    <property type="entry name" value="PRK13352.1"/>
    <property type="match status" value="1"/>
</dbReference>
<dbReference type="NCBIfam" id="TIGR00190">
    <property type="entry name" value="thiC"/>
    <property type="match status" value="1"/>
</dbReference>
<dbReference type="PANTHER" id="PTHR30557:SF1">
    <property type="entry name" value="PHOSPHOMETHYLPYRIMIDINE SYNTHASE, CHLOROPLASTIC"/>
    <property type="match status" value="1"/>
</dbReference>
<dbReference type="PANTHER" id="PTHR30557">
    <property type="entry name" value="THIAMINE BIOSYNTHESIS PROTEIN THIC"/>
    <property type="match status" value="1"/>
</dbReference>
<dbReference type="Pfam" id="PF13667">
    <property type="entry name" value="ThiC-associated"/>
    <property type="match status" value="1"/>
</dbReference>
<dbReference type="Pfam" id="PF01964">
    <property type="entry name" value="ThiC_Rad_SAM"/>
    <property type="match status" value="1"/>
</dbReference>
<dbReference type="SFLD" id="SFLDF00407">
    <property type="entry name" value="phosphomethylpyrimidine_syntha"/>
    <property type="match status" value="1"/>
</dbReference>
<dbReference type="SFLD" id="SFLDG01114">
    <property type="entry name" value="phosphomethylpyrimidine_syntha"/>
    <property type="match status" value="1"/>
</dbReference>
<dbReference type="SFLD" id="SFLDS00113">
    <property type="entry name" value="Radical_SAM_Phosphomethylpyrim"/>
    <property type="match status" value="1"/>
</dbReference>
<reference key="1">
    <citation type="submission" date="2003-03" db="EMBL/GenBank/DDBJ databases">
        <title>The complete genome sequence of Neisseria gonorrhoeae.</title>
        <authorList>
            <person name="Lewis L.A."/>
            <person name="Gillaspy A.F."/>
            <person name="McLaughlin R.E."/>
            <person name="Gipson M."/>
            <person name="Ducey T.F."/>
            <person name="Ownbey T."/>
            <person name="Hartman K."/>
            <person name="Nydick C."/>
            <person name="Carson M.B."/>
            <person name="Vaughn J."/>
            <person name="Thomson C."/>
            <person name="Song L."/>
            <person name="Lin S."/>
            <person name="Yuan X."/>
            <person name="Najar F."/>
            <person name="Zhan M."/>
            <person name="Ren Q."/>
            <person name="Zhu H."/>
            <person name="Qi S."/>
            <person name="Kenton S.M."/>
            <person name="Lai H."/>
            <person name="White J.D."/>
            <person name="Clifton S."/>
            <person name="Roe B.A."/>
            <person name="Dyer D.W."/>
        </authorList>
    </citation>
    <scope>NUCLEOTIDE SEQUENCE [LARGE SCALE GENOMIC DNA]</scope>
    <source>
        <strain>ATCC 700825 / FA 1090</strain>
    </source>
</reference>
<proteinExistence type="inferred from homology"/>
<accession>Q5F588</accession>